<comment type="function">
    <text evidence="1">Involved in the synthesis of meso-diaminopimelate (m-DAP or DL-DAP), required for both lysine and peptidoglycan biosynthesis. Catalyzes the direct conversion of tetrahydrodipicolinate to LL-diaminopimelate.</text>
</comment>
<comment type="catalytic activity">
    <reaction evidence="1">
        <text>(2S,6S)-2,6-diaminopimelate + 2-oxoglutarate = (S)-2,3,4,5-tetrahydrodipicolinate + L-glutamate + H2O + H(+)</text>
        <dbReference type="Rhea" id="RHEA:23988"/>
        <dbReference type="ChEBI" id="CHEBI:15377"/>
        <dbReference type="ChEBI" id="CHEBI:15378"/>
        <dbReference type="ChEBI" id="CHEBI:16810"/>
        <dbReference type="ChEBI" id="CHEBI:16845"/>
        <dbReference type="ChEBI" id="CHEBI:29985"/>
        <dbReference type="ChEBI" id="CHEBI:57609"/>
        <dbReference type="EC" id="2.6.1.83"/>
    </reaction>
</comment>
<comment type="cofactor">
    <cofactor evidence="1">
        <name>pyridoxal 5'-phosphate</name>
        <dbReference type="ChEBI" id="CHEBI:597326"/>
    </cofactor>
</comment>
<comment type="pathway">
    <text evidence="1">Amino-acid biosynthesis; L-lysine biosynthesis via DAP pathway; LL-2,6-diaminopimelate from (S)-tetrahydrodipicolinate (aminotransferase route): step 1/1.</text>
</comment>
<comment type="subunit">
    <text evidence="1">Homodimer.</text>
</comment>
<comment type="similarity">
    <text evidence="1">Belongs to the class-I pyridoxal-phosphate-dependent aminotransferase family. LL-diaminopimelate aminotransferase subfamily.</text>
</comment>
<name>DAPAT_PICP2</name>
<keyword id="KW-0032">Aminotransferase</keyword>
<keyword id="KW-0663">Pyridoxal phosphate</keyword>
<keyword id="KW-1185">Reference proteome</keyword>
<keyword id="KW-0808">Transferase</keyword>
<protein>
    <recommendedName>
        <fullName evidence="1">LL-diaminopimelate aminotransferase</fullName>
        <shortName evidence="1">DAP-AT</shortName>
        <shortName evidence="1">DAP-aminotransferase</shortName>
        <shortName evidence="1">LL-DAP-aminotransferase</shortName>
        <ecNumber evidence="1">2.6.1.83</ecNumber>
    </recommendedName>
</protein>
<evidence type="ECO:0000255" key="1">
    <source>
        <dbReference type="HAMAP-Rule" id="MF_01642"/>
    </source>
</evidence>
<feature type="chain" id="PRO_1000186874" description="LL-diaminopimelate aminotransferase">
    <location>
        <begin position="1"/>
        <end position="410"/>
    </location>
</feature>
<feature type="binding site" evidence="1">
    <location>
        <position position="15"/>
    </location>
    <ligand>
        <name>substrate</name>
    </ligand>
</feature>
<feature type="binding site" evidence="1">
    <location>
        <position position="42"/>
    </location>
    <ligand>
        <name>substrate</name>
    </ligand>
</feature>
<feature type="binding site" evidence="1">
    <location>
        <position position="72"/>
    </location>
    <ligand>
        <name>pyridoxal 5'-phosphate</name>
        <dbReference type="ChEBI" id="CHEBI:597326"/>
    </ligand>
</feature>
<feature type="binding site" evidence="1">
    <location>
        <begin position="108"/>
        <end position="109"/>
    </location>
    <ligand>
        <name>pyridoxal 5'-phosphate</name>
        <dbReference type="ChEBI" id="CHEBI:597326"/>
    </ligand>
</feature>
<feature type="binding site" evidence="1">
    <location>
        <position position="109"/>
    </location>
    <ligand>
        <name>substrate</name>
    </ligand>
</feature>
<feature type="binding site" evidence="1">
    <location>
        <position position="132"/>
    </location>
    <ligand>
        <name>pyridoxal 5'-phosphate</name>
        <dbReference type="ChEBI" id="CHEBI:597326"/>
    </ligand>
</feature>
<feature type="binding site" evidence="1">
    <location>
        <position position="132"/>
    </location>
    <ligand>
        <name>substrate</name>
    </ligand>
</feature>
<feature type="binding site" evidence="1">
    <location>
        <position position="187"/>
    </location>
    <ligand>
        <name>pyridoxal 5'-phosphate</name>
        <dbReference type="ChEBI" id="CHEBI:597326"/>
    </ligand>
</feature>
<feature type="binding site" evidence="1">
    <location>
        <position position="187"/>
    </location>
    <ligand>
        <name>substrate</name>
    </ligand>
</feature>
<feature type="binding site" evidence="1">
    <location>
        <position position="218"/>
    </location>
    <ligand>
        <name>pyridoxal 5'-phosphate</name>
        <dbReference type="ChEBI" id="CHEBI:597326"/>
    </ligand>
</feature>
<feature type="binding site" evidence="1">
    <location>
        <begin position="246"/>
        <end position="248"/>
    </location>
    <ligand>
        <name>pyridoxal 5'-phosphate</name>
        <dbReference type="ChEBI" id="CHEBI:597326"/>
    </ligand>
</feature>
<feature type="binding site" evidence="1">
    <location>
        <position position="257"/>
    </location>
    <ligand>
        <name>pyridoxal 5'-phosphate</name>
        <dbReference type="ChEBI" id="CHEBI:597326"/>
    </ligand>
</feature>
<feature type="binding site" evidence="1">
    <location>
        <position position="292"/>
    </location>
    <ligand>
        <name>pyridoxal 5'-phosphate</name>
        <dbReference type="ChEBI" id="CHEBI:597326"/>
    </ligand>
</feature>
<feature type="binding site" evidence="1">
    <location>
        <position position="292"/>
    </location>
    <ligand>
        <name>substrate</name>
    </ligand>
</feature>
<feature type="binding site" evidence="1">
    <location>
        <position position="388"/>
    </location>
    <ligand>
        <name>substrate</name>
    </ligand>
</feature>
<feature type="modified residue" description="N6-(pyridoxal phosphate)lysine" evidence="1">
    <location>
        <position position="249"/>
    </location>
</feature>
<reference key="1">
    <citation type="submission" date="2008-02" db="EMBL/GenBank/DDBJ databases">
        <title>Complete sequence of Synechococcus sp. PCC 7002.</title>
        <authorList>
            <person name="Li T."/>
            <person name="Zhao J."/>
            <person name="Zhao C."/>
            <person name="Liu Z."/>
            <person name="Zhao F."/>
            <person name="Marquardt J."/>
            <person name="Nomura C.T."/>
            <person name="Persson S."/>
            <person name="Detter J.C."/>
            <person name="Richardson P.M."/>
            <person name="Lanz C."/>
            <person name="Schuster S.C."/>
            <person name="Wang J."/>
            <person name="Li S."/>
            <person name="Huang X."/>
            <person name="Cai T."/>
            <person name="Yu Z."/>
            <person name="Luo J."/>
            <person name="Zhao J."/>
            <person name="Bryant D.A."/>
        </authorList>
    </citation>
    <scope>NUCLEOTIDE SEQUENCE [LARGE SCALE GENOMIC DNA]</scope>
    <source>
        <strain>ATCC 27264 / PCC 7002 / PR-6</strain>
    </source>
</reference>
<sequence length="410" mass="44879">MVRINENYLKLKAGYLFPEIARRVNGFLAENPNAPIIKLGIGDVTEPLPAACREAMAKAIDDMGDRANFKGYGPEQGYAWLREKIAAHDFQARGCDIDASEIFVSDGAKCDTGNILDIFGKDNTIAVTDPVYPVYVDTNVMAGHTGEADESGKYGGLTYIPITADNDFVAQIPTEKVDLIYLCFPNNPTGATATKEQLQAWVDYAKTNGSIIFFDAAYEAFITDESLPHSIYELEGAKDCAIEFRSFSKNAGFTGTRCAFTVVPKNLTVTASNGQAVQLWSLWNRRQSTKFNGVSYIVQRGAEAVYSEAGQAQIKTLIDFYLENAAIIRRELQAVGFDVYGGVNAPYVWVKTPAGLSSWDFFDKLLINCNVVGTPGSGFGAAGEGYFRISAFNSRENVLEAMKRITTAFQ</sequence>
<dbReference type="EC" id="2.6.1.83" evidence="1"/>
<dbReference type="EMBL" id="CP000951">
    <property type="protein sequence ID" value="ACA99202.1"/>
    <property type="molecule type" value="Genomic_DNA"/>
</dbReference>
<dbReference type="RefSeq" id="WP_012306825.1">
    <property type="nucleotide sequence ID" value="NZ_JAHHPU010000001.1"/>
</dbReference>
<dbReference type="SMR" id="B1XKF6"/>
<dbReference type="STRING" id="32049.SYNPCC7002_A1203"/>
<dbReference type="KEGG" id="syp:SYNPCC7002_A1203"/>
<dbReference type="eggNOG" id="COG0436">
    <property type="taxonomic scope" value="Bacteria"/>
</dbReference>
<dbReference type="HOGENOM" id="CLU_051433_0_0_3"/>
<dbReference type="UniPathway" id="UPA00034">
    <property type="reaction ID" value="UER00466"/>
</dbReference>
<dbReference type="Proteomes" id="UP000001688">
    <property type="component" value="Chromosome"/>
</dbReference>
<dbReference type="GO" id="GO:0010285">
    <property type="term" value="F:L,L-diaminopimelate aminotransferase activity"/>
    <property type="evidence" value="ECO:0007669"/>
    <property type="project" value="UniProtKB-UniRule"/>
</dbReference>
<dbReference type="GO" id="GO:0030170">
    <property type="term" value="F:pyridoxal phosphate binding"/>
    <property type="evidence" value="ECO:0007669"/>
    <property type="project" value="UniProtKB-UniRule"/>
</dbReference>
<dbReference type="GO" id="GO:0033362">
    <property type="term" value="P:lysine biosynthetic process via diaminopimelate, diaminopimelate-aminotransferase pathway"/>
    <property type="evidence" value="ECO:0007669"/>
    <property type="project" value="UniProtKB-UniRule"/>
</dbReference>
<dbReference type="CDD" id="cd00609">
    <property type="entry name" value="AAT_like"/>
    <property type="match status" value="1"/>
</dbReference>
<dbReference type="FunFam" id="3.40.640.10:FF:000099">
    <property type="entry name" value="LL-diaminopimelate aminotransferase, chloroplastic"/>
    <property type="match status" value="1"/>
</dbReference>
<dbReference type="Gene3D" id="3.90.1150.10">
    <property type="entry name" value="Aspartate Aminotransferase, domain 1"/>
    <property type="match status" value="1"/>
</dbReference>
<dbReference type="Gene3D" id="3.40.640.10">
    <property type="entry name" value="Type I PLP-dependent aspartate aminotransferase-like (Major domain)"/>
    <property type="match status" value="1"/>
</dbReference>
<dbReference type="HAMAP" id="MF_01642">
    <property type="entry name" value="DapL_aminotrans_1"/>
    <property type="match status" value="1"/>
</dbReference>
<dbReference type="InterPro" id="IPR004839">
    <property type="entry name" value="Aminotransferase_I/II_large"/>
</dbReference>
<dbReference type="InterPro" id="IPR019942">
    <property type="entry name" value="DapL/ALD1"/>
</dbReference>
<dbReference type="InterPro" id="IPR015424">
    <property type="entry name" value="PyrdxlP-dep_Trfase"/>
</dbReference>
<dbReference type="InterPro" id="IPR015421">
    <property type="entry name" value="PyrdxlP-dep_Trfase_major"/>
</dbReference>
<dbReference type="InterPro" id="IPR015422">
    <property type="entry name" value="PyrdxlP-dep_Trfase_small"/>
</dbReference>
<dbReference type="NCBIfam" id="TIGR03542">
    <property type="entry name" value="DAPAT_plant"/>
    <property type="match status" value="1"/>
</dbReference>
<dbReference type="PANTHER" id="PTHR43144">
    <property type="entry name" value="AMINOTRANSFERASE"/>
    <property type="match status" value="1"/>
</dbReference>
<dbReference type="Pfam" id="PF00155">
    <property type="entry name" value="Aminotran_1_2"/>
    <property type="match status" value="1"/>
</dbReference>
<dbReference type="SUPFAM" id="SSF53383">
    <property type="entry name" value="PLP-dependent transferases"/>
    <property type="match status" value="1"/>
</dbReference>
<gene>
    <name evidence="1" type="primary">dapL</name>
    <name type="ordered locus">SYNPCC7002_A1203</name>
</gene>
<proteinExistence type="inferred from homology"/>
<accession>B1XKF6</accession>
<organism>
    <name type="scientific">Picosynechococcus sp. (strain ATCC 27264 / PCC 7002 / PR-6)</name>
    <name type="common">Agmenellum quadruplicatum</name>
    <dbReference type="NCBI Taxonomy" id="32049"/>
    <lineage>
        <taxon>Bacteria</taxon>
        <taxon>Bacillati</taxon>
        <taxon>Cyanobacteriota</taxon>
        <taxon>Cyanophyceae</taxon>
        <taxon>Oscillatoriophycideae</taxon>
        <taxon>Chroococcales</taxon>
        <taxon>Geminocystaceae</taxon>
        <taxon>Picosynechococcus</taxon>
    </lineage>
</organism>